<comment type="similarity">
    <text evidence="1">Belongs to the herpesviridae BBRF1 family.</text>
</comment>
<evidence type="ECO:0000305" key="1"/>
<dbReference type="EMBL" id="X64346">
    <property type="protein sequence ID" value="CAA45673.1"/>
    <property type="molecule type" value="Genomic_DNA"/>
</dbReference>
<dbReference type="EMBL" id="M86409">
    <property type="protein sequence ID" value="AAA46127.1"/>
    <property type="molecule type" value="Genomic_DNA"/>
</dbReference>
<dbReference type="EMBL" id="M60850">
    <property type="protein sequence ID" value="AAA46158.1"/>
    <property type="molecule type" value="Genomic_DNA"/>
</dbReference>
<dbReference type="RefSeq" id="NP_040251.1">
    <property type="nucleotide sequence ID" value="NC_001350.1"/>
</dbReference>
<dbReference type="SMR" id="Q01032"/>
<dbReference type="KEGG" id="vg:1682480"/>
<dbReference type="Proteomes" id="UP000000587">
    <property type="component" value="Segment"/>
</dbReference>
<dbReference type="InterPro" id="IPR006878">
    <property type="entry name" value="Herpes_BBRF1"/>
</dbReference>
<dbReference type="Pfam" id="PF04793">
    <property type="entry name" value="Herpes_BBRF1"/>
    <property type="match status" value="1"/>
</dbReference>
<reference key="1">
    <citation type="journal article" date="1992" name="J. Virol.">
        <title>Primary structure of the herpesvirus saimiri genome.</title>
        <authorList>
            <person name="Albrecht J.-C."/>
            <person name="Nicholas J."/>
            <person name="Biller D."/>
            <person name="Cameron K.R."/>
            <person name="Biesinger B."/>
            <person name="Newman C."/>
            <person name="Wittmann S."/>
            <person name="Craxton M.A."/>
            <person name="Coleman H."/>
            <person name="Fleckenstein B."/>
            <person name="Honess R.W."/>
        </authorList>
    </citation>
    <scope>NUCLEOTIDE SEQUENCE [LARGE SCALE GENOMIC DNA]</scope>
</reference>
<reference key="2">
    <citation type="journal article" date="1992" name="Virology">
        <title>Analysis of nucleotide sequence of the rightmost 43 kbp of herpesvirus saimiri (HVS) L-DNA: general conservation of genetic organization between HVS and Epstein-Barr virus.</title>
        <authorList>
            <person name="Nicholas J."/>
            <person name="Cameron K.R."/>
            <person name="Coleman H."/>
            <person name="Newman C."/>
            <person name="Honess R.W."/>
        </authorList>
    </citation>
    <scope>NUCLEOTIDE SEQUENCE [GENOMIC DNA]</scope>
</reference>
<reference key="3">
    <citation type="journal article" date="1988" name="J. Virol.">
        <title>Regulation of the herpesvirus saimiri (HVS) delayed-early 110-kilodalton promoter by HVS immediate-early gene products and a homolog of the Epstein-Barr virus R trans activator.</title>
        <authorList>
            <person name="Nicholas J."/>
            <person name="Coles L.S."/>
            <person name="Newman C."/>
            <person name="Honess R.W."/>
        </authorList>
    </citation>
    <scope>NUCLEOTIDE SEQUENCE [GENOMIC DNA]</scope>
</reference>
<accession>Q01032</accession>
<organism>
    <name type="scientific">Saimiriine herpesvirus 2 (strain 11)</name>
    <name type="common">SaHV-2</name>
    <name type="synonym">Herpesvirus saimiri</name>
    <dbReference type="NCBI Taxonomy" id="10383"/>
    <lineage>
        <taxon>Viruses</taxon>
        <taxon>Duplodnaviria</taxon>
        <taxon>Heunggongvirae</taxon>
        <taxon>Peploviricota</taxon>
        <taxon>Herviviricetes</taxon>
        <taxon>Herpesvirales</taxon>
        <taxon>Orthoherpesviridae</taxon>
        <taxon>Gammaherpesvirinae</taxon>
        <taxon>Rhadinovirus</taxon>
        <taxon>Rhadinovirus saimiriinegamma2</taxon>
        <taxon>Saimiriine herpesvirus 2</taxon>
    </lineage>
</organism>
<organismHost>
    <name type="scientific">Saimiri sciureus</name>
    <name type="common">Common squirrel monkey</name>
    <dbReference type="NCBI Taxonomy" id="9521"/>
</organismHost>
<gene>
    <name type="primary">49</name>
    <name type="synonym">EDLF4</name>
</gene>
<sequence>MSRPYQPQRYSLISELHKNFHYVDVSVIQSEFKNVILKTVVPKLSQPATHLEKGDFLLKICQLLMIHREEEQQILNKVKSNIIYFLNELWSAEYGKVQEQVKNILCEVKLDKTDSELSTYLAQEIPKLTVLKYPTHFKVCEETIPNGRWCLHNLLGIEQYYKDFSNIVLHDPETSLGSVQAYSRLSKLLFWCDSFMNKIYPCNAFNSSINQVVLWSTMFHFYSVAHCNDCISESISFTEALLKQEVSAFYEWCLEEEYEEDRMAKFMKFSADQITILSTHTDLQNLAEYIYSYKKCLINRRFE</sequence>
<protein>
    <recommendedName>
        <fullName>Uncharacterized gene 49 protein</fullName>
    </recommendedName>
</protein>
<proteinExistence type="inferred from homology"/>
<keyword id="KW-1185">Reference proteome</keyword>
<name>VG49_SHV21</name>
<feature type="chain" id="PRO_0000116259" description="Uncharacterized gene 49 protein">
    <location>
        <begin position="1"/>
        <end position="303"/>
    </location>
</feature>